<sequence length="580" mass="63165">MDGVEIIAKSIKNSAIEKVFGIVGVPITPIAYELQAQGVGFFGFRNEQSCSYAASIVGYLTGLPGLCMTVSGPGVVHALAGVLNAQSNGWPMILLSSSIDQSLVGKGGFQECKQFESAELYCKKCYYLTEIDHFPEILKDAIETSLSNRPGPVYIQIPADLIKSKCKESPNIREAAGYGTIAIKSVVPDMKLIKDAVQLLSEAKRPLVIGGKGAAYCRSENELLEFIEATKIPFLPSPMGKGLLRDDHPLVVGAARSYALKNADVVLVLGARLNWMFNFGKAPTFSTDVKFIIVDVDENQASKTKNPNVVPEIAIVGDARLSIAEMRKLFIGETDEQPQPPQDSLIKSMKMEESWWSNLNQDIQVKTKSLATLMSEPQNNDQEYLTYHKVFNALRVGGLFQEDTIFVNEGANTMDIGRLCIPQTLPRSRLDAGTLATMGVGVGYSVAAQICFPDRSVVCIQGDSAFGFSAMEMEVAVRYKLPIVFIVLNNNGVYEGLESMSDPKYTSSTESASLHIPPTSLSVDTKYELIMQSFGGTGYSISTISNLLDICKQIKSKQISLPTLLNIKIKPTGTKPKIVH</sequence>
<comment type="function">
    <text evidence="3">Peroxisomal 2-OH acyl-CoA lyase involved in the cleavage (C1 removal) reaction in the fatty acid alpha-oxydation in a thiamine pyrophosphate (TPP)-dependent manner. Involved in the degradation of 3-methyl-branched fatty acids and the shortening of 2-hydroxy long-chain fatty acids.</text>
</comment>
<comment type="catalytic activity">
    <reaction evidence="2">
        <text>a 2-hydroxy-3-methyl fatty acyl-CoA = a 2-methyl-branched fatty aldehyde + formyl-CoA</text>
        <dbReference type="Rhea" id="RHEA:25375"/>
        <dbReference type="ChEBI" id="CHEBI:49188"/>
        <dbReference type="ChEBI" id="CHEBI:57376"/>
        <dbReference type="ChEBI" id="CHEBI:58783"/>
        <dbReference type="EC" id="4.1.2.63"/>
    </reaction>
    <physiologicalReaction direction="left-to-right" evidence="2">
        <dbReference type="Rhea" id="RHEA:25376"/>
    </physiologicalReaction>
</comment>
<comment type="catalytic activity">
    <reaction evidence="2">
        <text>an (R)-2-hydroxy-long-chain-fatty acyl-CoA = a long-chain fatty aldehyde + formyl-CoA</text>
        <dbReference type="Rhea" id="RHEA:67444"/>
        <dbReference type="ChEBI" id="CHEBI:17176"/>
        <dbReference type="ChEBI" id="CHEBI:57376"/>
        <dbReference type="ChEBI" id="CHEBI:170012"/>
        <dbReference type="EC" id="4.1.2.63"/>
    </reaction>
    <physiologicalReaction direction="left-to-right" evidence="2">
        <dbReference type="Rhea" id="RHEA:67445"/>
    </physiologicalReaction>
</comment>
<comment type="catalytic activity">
    <reaction evidence="2">
        <text>2-hydroxy-3-methylhexadecanoyl-CoA = 2-methylpentadecanal + formyl-CoA</text>
        <dbReference type="Rhea" id="RHEA:25379"/>
        <dbReference type="ChEBI" id="CHEBI:49190"/>
        <dbReference type="ChEBI" id="CHEBI:57376"/>
        <dbReference type="ChEBI" id="CHEBI:58784"/>
    </reaction>
    <physiologicalReaction direction="left-to-right" evidence="2">
        <dbReference type="Rhea" id="RHEA:25380"/>
    </physiologicalReaction>
</comment>
<comment type="catalytic activity">
    <reaction evidence="3">
        <text>2-hydroxyoctadecanoyl-CoA = heptadecanal + formyl-CoA</text>
        <dbReference type="Rhea" id="RHEA:55196"/>
        <dbReference type="ChEBI" id="CHEBI:57376"/>
        <dbReference type="ChEBI" id="CHEBI:74116"/>
        <dbReference type="ChEBI" id="CHEBI:138631"/>
    </reaction>
    <physiologicalReaction direction="left-to-right" evidence="3">
        <dbReference type="Rhea" id="RHEA:55197"/>
    </physiologicalReaction>
</comment>
<comment type="cofactor">
    <cofactor evidence="2">
        <name>Mg(2+)</name>
        <dbReference type="ChEBI" id="CHEBI:18420"/>
    </cofactor>
    <text evidence="2">Binds 1 Mg(2+) ion per subunit.</text>
</comment>
<comment type="cofactor">
    <cofactor evidence="2">
        <name>thiamine diphosphate</name>
        <dbReference type="ChEBI" id="CHEBI:58937"/>
    </cofactor>
    <text evidence="2">Binds 1 thiamine pyrophosphate per subunit.</text>
</comment>
<comment type="subunit">
    <text evidence="2">Homotetramer.</text>
</comment>
<comment type="subcellular location">
    <subcellularLocation>
        <location evidence="3">Peroxisome</location>
    </subcellularLocation>
</comment>
<comment type="similarity">
    <text evidence="4">Belongs to the TPP enzyme family.</text>
</comment>
<keyword id="KW-0276">Fatty acid metabolism</keyword>
<keyword id="KW-0443">Lipid metabolism</keyword>
<keyword id="KW-0456">Lyase</keyword>
<keyword id="KW-0460">Magnesium</keyword>
<keyword id="KW-0479">Metal-binding</keyword>
<keyword id="KW-0576">Peroxisome</keyword>
<keyword id="KW-1185">Reference proteome</keyword>
<keyword id="KW-0786">Thiamine pyrophosphate</keyword>
<organism>
    <name type="scientific">Dictyostelium discoideum</name>
    <name type="common">Social amoeba</name>
    <dbReference type="NCBI Taxonomy" id="44689"/>
    <lineage>
        <taxon>Eukaryota</taxon>
        <taxon>Amoebozoa</taxon>
        <taxon>Evosea</taxon>
        <taxon>Eumycetozoa</taxon>
        <taxon>Dictyostelia</taxon>
        <taxon>Dictyosteliales</taxon>
        <taxon>Dictyosteliaceae</taxon>
        <taxon>Dictyostelium</taxon>
    </lineage>
</organism>
<proteinExistence type="inferred from homology"/>
<feature type="chain" id="PRO_0000327866" description="2-hydroxyacyl-CoA lyase 1">
    <location>
        <begin position="1"/>
        <end position="580"/>
    </location>
</feature>
<feature type="region of interest" description="Thiamine pyrophosphate binding" evidence="1">
    <location>
        <begin position="413"/>
        <end position="494"/>
    </location>
</feature>
<feature type="binding site" evidence="1">
    <location>
        <position position="47"/>
    </location>
    <ligand>
        <name>thiamine diphosphate</name>
        <dbReference type="ChEBI" id="CHEBI:58937"/>
    </ligand>
</feature>
<feature type="binding site" evidence="1">
    <location>
        <position position="463"/>
    </location>
    <ligand>
        <name>Mg(2+)</name>
        <dbReference type="ChEBI" id="CHEBI:18420"/>
    </ligand>
</feature>
<feature type="binding site" evidence="1">
    <location>
        <position position="490"/>
    </location>
    <ligand>
        <name>Mg(2+)</name>
        <dbReference type="ChEBI" id="CHEBI:18420"/>
    </ligand>
</feature>
<reference key="1">
    <citation type="journal article" date="2005" name="Nature">
        <title>The genome of the social amoeba Dictyostelium discoideum.</title>
        <authorList>
            <person name="Eichinger L."/>
            <person name="Pachebat J.A."/>
            <person name="Gloeckner G."/>
            <person name="Rajandream M.A."/>
            <person name="Sucgang R."/>
            <person name="Berriman M."/>
            <person name="Song J."/>
            <person name="Olsen R."/>
            <person name="Szafranski K."/>
            <person name="Xu Q."/>
            <person name="Tunggal B."/>
            <person name="Kummerfeld S."/>
            <person name="Madera M."/>
            <person name="Konfortov B.A."/>
            <person name="Rivero F."/>
            <person name="Bankier A.T."/>
            <person name="Lehmann R."/>
            <person name="Hamlin N."/>
            <person name="Davies R."/>
            <person name="Gaudet P."/>
            <person name="Fey P."/>
            <person name="Pilcher K."/>
            <person name="Chen G."/>
            <person name="Saunders D."/>
            <person name="Sodergren E.J."/>
            <person name="Davis P."/>
            <person name="Kerhornou A."/>
            <person name="Nie X."/>
            <person name="Hall N."/>
            <person name="Anjard C."/>
            <person name="Hemphill L."/>
            <person name="Bason N."/>
            <person name="Farbrother P."/>
            <person name="Desany B."/>
            <person name="Just E."/>
            <person name="Morio T."/>
            <person name="Rost R."/>
            <person name="Churcher C.M."/>
            <person name="Cooper J."/>
            <person name="Haydock S."/>
            <person name="van Driessche N."/>
            <person name="Cronin A."/>
            <person name="Goodhead I."/>
            <person name="Muzny D.M."/>
            <person name="Mourier T."/>
            <person name="Pain A."/>
            <person name="Lu M."/>
            <person name="Harper D."/>
            <person name="Lindsay R."/>
            <person name="Hauser H."/>
            <person name="James K.D."/>
            <person name="Quiles M."/>
            <person name="Madan Babu M."/>
            <person name="Saito T."/>
            <person name="Buchrieser C."/>
            <person name="Wardroper A."/>
            <person name="Felder M."/>
            <person name="Thangavelu M."/>
            <person name="Johnson D."/>
            <person name="Knights A."/>
            <person name="Loulseged H."/>
            <person name="Mungall K.L."/>
            <person name="Oliver K."/>
            <person name="Price C."/>
            <person name="Quail M.A."/>
            <person name="Urushihara H."/>
            <person name="Hernandez J."/>
            <person name="Rabbinowitsch E."/>
            <person name="Steffen D."/>
            <person name="Sanders M."/>
            <person name="Ma J."/>
            <person name="Kohara Y."/>
            <person name="Sharp S."/>
            <person name="Simmonds M.N."/>
            <person name="Spiegler S."/>
            <person name="Tivey A."/>
            <person name="Sugano S."/>
            <person name="White B."/>
            <person name="Walker D."/>
            <person name="Woodward J.R."/>
            <person name="Winckler T."/>
            <person name="Tanaka Y."/>
            <person name="Shaulsky G."/>
            <person name="Schleicher M."/>
            <person name="Weinstock G.M."/>
            <person name="Rosenthal A."/>
            <person name="Cox E.C."/>
            <person name="Chisholm R.L."/>
            <person name="Gibbs R.A."/>
            <person name="Loomis W.F."/>
            <person name="Platzer M."/>
            <person name="Kay R.R."/>
            <person name="Williams J.G."/>
            <person name="Dear P.H."/>
            <person name="Noegel A.A."/>
            <person name="Barrell B.G."/>
            <person name="Kuspa A."/>
        </authorList>
    </citation>
    <scope>NUCLEOTIDE SEQUENCE [LARGE SCALE GENOMIC DNA]</scope>
    <source>
        <strain>AX4</strain>
    </source>
</reference>
<evidence type="ECO:0000250" key="1">
    <source>
        <dbReference type="UniProtKB" id="P40149"/>
    </source>
</evidence>
<evidence type="ECO:0000250" key="2">
    <source>
        <dbReference type="UniProtKB" id="Q8CHM7"/>
    </source>
</evidence>
<evidence type="ECO:0000250" key="3">
    <source>
        <dbReference type="UniProtKB" id="Q9UJ83"/>
    </source>
</evidence>
<evidence type="ECO:0000305" key="4"/>
<accession>Q54DA9</accession>
<dbReference type="EC" id="4.1.2.63" evidence="2"/>
<dbReference type="EMBL" id="AAFI02000190">
    <property type="protein sequence ID" value="EAL61180.1"/>
    <property type="molecule type" value="Genomic_DNA"/>
</dbReference>
<dbReference type="RefSeq" id="XP_629587.1">
    <property type="nucleotide sequence ID" value="XM_629585.1"/>
</dbReference>
<dbReference type="SMR" id="Q54DA9"/>
<dbReference type="FunCoup" id="Q54DA9">
    <property type="interactions" value="517"/>
</dbReference>
<dbReference type="STRING" id="44689.Q54DA9"/>
<dbReference type="PaxDb" id="44689-DDB0305141"/>
<dbReference type="EnsemblProtists" id="EAL61180">
    <property type="protein sequence ID" value="EAL61180"/>
    <property type="gene ID" value="DDB_G0292402"/>
</dbReference>
<dbReference type="GeneID" id="8628647"/>
<dbReference type="KEGG" id="ddi:DDB_G0292402"/>
<dbReference type="dictyBase" id="DDB_G0292402">
    <property type="gene designation" value="hacl1"/>
</dbReference>
<dbReference type="VEuPathDB" id="AmoebaDB:DDB_G0292402"/>
<dbReference type="eggNOG" id="KOG1185">
    <property type="taxonomic scope" value="Eukaryota"/>
</dbReference>
<dbReference type="HOGENOM" id="CLU_013748_3_3_1"/>
<dbReference type="InParanoid" id="Q54DA9"/>
<dbReference type="OMA" id="QETDMIG"/>
<dbReference type="PhylomeDB" id="Q54DA9"/>
<dbReference type="Reactome" id="R-DDI-389599">
    <property type="pathway name" value="Alpha-oxidation of phytanate"/>
</dbReference>
<dbReference type="Reactome" id="R-DDI-9033241">
    <property type="pathway name" value="Peroxisomal protein import"/>
</dbReference>
<dbReference type="PRO" id="PR:Q54DA9"/>
<dbReference type="Proteomes" id="UP000002195">
    <property type="component" value="Chromosome 6"/>
</dbReference>
<dbReference type="GO" id="GO:0005777">
    <property type="term" value="C:peroxisome"/>
    <property type="evidence" value="ECO:0000250"/>
    <property type="project" value="UniProtKB"/>
</dbReference>
<dbReference type="GO" id="GO:0106359">
    <property type="term" value="F:2-hydroxyacyl-CoA lyase activity"/>
    <property type="evidence" value="ECO:0007669"/>
    <property type="project" value="RHEA"/>
</dbReference>
<dbReference type="GO" id="GO:0016830">
    <property type="term" value="F:carbon-carbon lyase activity"/>
    <property type="evidence" value="ECO:0000250"/>
    <property type="project" value="UniProtKB"/>
</dbReference>
<dbReference type="GO" id="GO:0000287">
    <property type="term" value="F:magnesium ion binding"/>
    <property type="evidence" value="ECO:0007669"/>
    <property type="project" value="InterPro"/>
</dbReference>
<dbReference type="GO" id="GO:0030976">
    <property type="term" value="F:thiamine pyrophosphate binding"/>
    <property type="evidence" value="ECO:0000250"/>
    <property type="project" value="UniProtKB"/>
</dbReference>
<dbReference type="GO" id="GO:0001561">
    <property type="term" value="P:fatty acid alpha-oxidation"/>
    <property type="evidence" value="ECO:0000250"/>
    <property type="project" value="UniProtKB"/>
</dbReference>
<dbReference type="GO" id="GO:0006625">
    <property type="term" value="P:protein targeting to peroxisome"/>
    <property type="evidence" value="ECO:0000250"/>
    <property type="project" value="UniProtKB"/>
</dbReference>
<dbReference type="CDD" id="cd02004">
    <property type="entry name" value="TPP_BZL_OCoD_HPCL"/>
    <property type="match status" value="1"/>
</dbReference>
<dbReference type="CDD" id="cd07035">
    <property type="entry name" value="TPP_PYR_POX_like"/>
    <property type="match status" value="1"/>
</dbReference>
<dbReference type="FunFam" id="3.40.50.1220:FF:000085">
    <property type="entry name" value="Probable 2-hydroxyacyl-CoA lyase 1"/>
    <property type="match status" value="1"/>
</dbReference>
<dbReference type="FunFam" id="3.40.50.970:FF:000054">
    <property type="entry name" value="Putative 2-hydroxyphytanoyl-CoA lyase"/>
    <property type="match status" value="1"/>
</dbReference>
<dbReference type="Gene3D" id="3.40.50.970">
    <property type="match status" value="2"/>
</dbReference>
<dbReference type="Gene3D" id="3.40.50.1220">
    <property type="entry name" value="TPP-binding domain"/>
    <property type="match status" value="1"/>
</dbReference>
<dbReference type="InterPro" id="IPR029035">
    <property type="entry name" value="DHS-like_NAD/FAD-binding_dom"/>
</dbReference>
<dbReference type="InterPro" id="IPR045025">
    <property type="entry name" value="HACL1-like"/>
</dbReference>
<dbReference type="InterPro" id="IPR029061">
    <property type="entry name" value="THDP-binding"/>
</dbReference>
<dbReference type="InterPro" id="IPR012000">
    <property type="entry name" value="Thiamin_PyroP_enz_cen_dom"/>
</dbReference>
<dbReference type="InterPro" id="IPR012001">
    <property type="entry name" value="Thiamin_PyroP_enz_TPP-bd_dom"/>
</dbReference>
<dbReference type="InterPro" id="IPR000399">
    <property type="entry name" value="TPP-bd_CS"/>
</dbReference>
<dbReference type="InterPro" id="IPR011766">
    <property type="entry name" value="TPP_enzyme_TPP-bd"/>
</dbReference>
<dbReference type="PANTHER" id="PTHR43710">
    <property type="entry name" value="2-HYDROXYACYL-COA LYASE"/>
    <property type="match status" value="1"/>
</dbReference>
<dbReference type="PANTHER" id="PTHR43710:SF2">
    <property type="entry name" value="2-HYDROXYACYL-COA LYASE 1"/>
    <property type="match status" value="1"/>
</dbReference>
<dbReference type="Pfam" id="PF02775">
    <property type="entry name" value="TPP_enzyme_C"/>
    <property type="match status" value="1"/>
</dbReference>
<dbReference type="Pfam" id="PF00205">
    <property type="entry name" value="TPP_enzyme_M"/>
    <property type="match status" value="1"/>
</dbReference>
<dbReference type="Pfam" id="PF02776">
    <property type="entry name" value="TPP_enzyme_N"/>
    <property type="match status" value="1"/>
</dbReference>
<dbReference type="SUPFAM" id="SSF52467">
    <property type="entry name" value="DHS-like NAD/FAD-binding domain"/>
    <property type="match status" value="1"/>
</dbReference>
<dbReference type="SUPFAM" id="SSF52518">
    <property type="entry name" value="Thiamin diphosphate-binding fold (THDP-binding)"/>
    <property type="match status" value="2"/>
</dbReference>
<dbReference type="PROSITE" id="PS00187">
    <property type="entry name" value="TPP_ENZYMES"/>
    <property type="match status" value="1"/>
</dbReference>
<gene>
    <name type="primary">hacl1</name>
    <name type="ORF">DDB_G0292402</name>
</gene>
<protein>
    <recommendedName>
        <fullName>2-hydroxyacyl-CoA lyase 1</fullName>
        <ecNumber evidence="2">4.1.2.63</ecNumber>
    </recommendedName>
    <alternativeName>
        <fullName>2-hydroxyphytanoyl-CoA lyase</fullName>
        <shortName>2-HPCL</shortName>
    </alternativeName>
</protein>
<name>HACL1_DICDI</name>